<protein>
    <recommendedName>
        <fullName evidence="6">KTx type I</fullName>
    </recommendedName>
    <alternativeName>
        <fullName evidence="7">ShK-like</fullName>
    </alternativeName>
    <alternativeName>
        <fullName evidence="7">ShKC10-Cpp1a</fullName>
    </alternativeName>
</protein>
<sequence length="88" mass="9676">MKTTLVVVVLACIVALTSALEADLLSHESCRYISSNRYCGHDYMDKLCNTTCNCKDVLSEFSCGVLKKDGQCNKADIQAKCKLTCDKC</sequence>
<reference key="1">
    <citation type="journal article" date="2023" name="Toxins">
        <title>Acontia, a specialised defensive structure, has low venom complexity in Calliactis polypus.</title>
        <authorList>
            <person name="Smith H.L."/>
            <person name="Prentis P.J."/>
            <person name="Bryan S.E."/>
            <person name="Norton R.S."/>
            <person name="Broszczak D.A."/>
        </authorList>
    </citation>
    <scope>NUCLEOTIDE SEQUENCE [MRNA]</scope>
    <scope>IDENTIFICATION BY MASS SPECTROMETRY</scope>
    <scope>SUBCELLULAR LOCATION</scope>
    <scope>TISSUE SPECIFICITY</scope>
</reference>
<reference key="2">
    <citation type="journal article" date="2024" name="Genome Biol. Evol.">
        <title>Molecular insights into the low complexity secreted venom of Calliactis polypus.</title>
        <authorList>
            <person name="Smith H.L."/>
            <person name="Broszczak D.A."/>
            <person name="Bryan S.E."/>
            <person name="Norton R.S."/>
            <person name="Prentis P.J."/>
        </authorList>
    </citation>
    <scope>NUCLEOTIDE SEQUENCE [MRNA]</scope>
    <scope>IDENTIFICATION BY MASS SPECTROMETRY</scope>
    <scope>TISSUE SPECIFICITY</scope>
    <scope>SUBCELLULAR LOCATION</scope>
</reference>
<organism>
    <name type="scientific">Calliactis polypus</name>
    <name type="common">Hermit crab anemone</name>
    <name type="synonym">Priapus polypus</name>
    <dbReference type="NCBI Taxonomy" id="656064"/>
    <lineage>
        <taxon>Eukaryota</taxon>
        <taxon>Metazoa</taxon>
        <taxon>Cnidaria</taxon>
        <taxon>Anthozoa</taxon>
        <taxon>Hexacorallia</taxon>
        <taxon>Actiniaria</taxon>
        <taxon>Nynantheae</taxon>
        <taxon>Hormathiidae</taxon>
        <taxon>Calliactis</taxon>
    </lineage>
</organism>
<accession>P0DY41</accession>
<keyword id="KW-1015">Disulfide bond</keyword>
<keyword id="KW-0872">Ion channel impairing toxin</keyword>
<keyword id="KW-0166">Nematocyst</keyword>
<keyword id="KW-0632">Potassium channel impairing toxin</keyword>
<keyword id="KW-0964">Secreted</keyword>
<keyword id="KW-0732">Signal</keyword>
<keyword id="KW-0800">Toxin</keyword>
<keyword id="KW-1220">Voltage-gated potassium channel impairing toxin</keyword>
<feature type="signal peptide" evidence="2">
    <location>
        <begin position="1"/>
        <end position="19"/>
    </location>
</feature>
<feature type="chain" id="PRO_0000462163" description="KTx type I" evidence="2">
    <location>
        <begin position="20"/>
        <end position="88"/>
    </location>
</feature>
<feature type="domain" description="ShKT" evidence="3">
    <location>
        <begin position="54"/>
        <end position="88"/>
    </location>
</feature>
<feature type="disulfide bond" evidence="3">
    <location>
        <begin position="54"/>
        <end position="88"/>
    </location>
</feature>
<feature type="disulfide bond" evidence="3">
    <location>
        <begin position="63"/>
        <end position="81"/>
    </location>
</feature>
<feature type="disulfide bond" evidence="3">
    <location>
        <begin position="72"/>
        <end position="85"/>
    </location>
</feature>
<proteinExistence type="evidence at protein level"/>
<name>KTX1_CALPY</name>
<dbReference type="InterPro" id="IPR003582">
    <property type="entry name" value="ShKT_dom"/>
</dbReference>
<dbReference type="Pfam" id="PF01549">
    <property type="entry name" value="ShK"/>
    <property type="match status" value="2"/>
</dbReference>
<dbReference type="PROSITE" id="PS51670">
    <property type="entry name" value="SHKT"/>
    <property type="match status" value="1"/>
</dbReference>
<comment type="function">
    <text evidence="1">Inhibits voltage-gated potassium channels (Kv1/KCNA).</text>
</comment>
<comment type="subcellular location">
    <subcellularLocation>
        <location evidence="4 5">Secreted</location>
    </subcellularLocation>
    <subcellularLocation>
        <location evidence="8">Nematocyst</location>
    </subcellularLocation>
</comment>
<comment type="tissue specificity">
    <text evidence="4 5">Expressed both outside and in acontia, a specialised envenomation structure laden with batteries of venom-containing nematocysts found only in the superfamily Metridioidea.</text>
</comment>
<comment type="similarity">
    <text evidence="8">Belongs to the sea anemone type 1 potassium channel toxin family.</text>
</comment>
<gene>
    <name evidence="6 7" type="ORF">c32422_g1_i1</name>
</gene>
<evidence type="ECO:0000250" key="1">
    <source>
        <dbReference type="UniProtKB" id="Q0EAE5"/>
    </source>
</evidence>
<evidence type="ECO:0000255" key="2"/>
<evidence type="ECO:0000255" key="3">
    <source>
        <dbReference type="PROSITE-ProRule" id="PRU01005"/>
    </source>
</evidence>
<evidence type="ECO:0000269" key="4">
    <source>
    </source>
</evidence>
<evidence type="ECO:0000269" key="5">
    <source>
    </source>
</evidence>
<evidence type="ECO:0000303" key="6">
    <source>
    </source>
</evidence>
<evidence type="ECO:0000303" key="7">
    <source>
    </source>
</evidence>
<evidence type="ECO:0000305" key="8"/>